<protein>
    <recommendedName>
        <fullName evidence="1">Polyphosphate kinase</fullName>
        <ecNumber evidence="1">2.7.4.1</ecNumber>
    </recommendedName>
    <alternativeName>
        <fullName evidence="1">ATP-polyphosphate phosphotransferase</fullName>
    </alternativeName>
    <alternativeName>
        <fullName evidence="1">Polyphosphoric acid kinase</fullName>
    </alternativeName>
</protein>
<proteinExistence type="inferred from homology"/>
<dbReference type="EC" id="2.7.4.1" evidence="1"/>
<dbReference type="EMBL" id="BX897699">
    <property type="protein sequence ID" value="CAF27775.1"/>
    <property type="molecule type" value="Genomic_DNA"/>
</dbReference>
<dbReference type="RefSeq" id="WP_011180853.1">
    <property type="nucleotide sequence ID" value="NC_005956.1"/>
</dbReference>
<dbReference type="SMR" id="Q6G327"/>
<dbReference type="PaxDb" id="283166-BH09820"/>
<dbReference type="EnsemblBacteria" id="CAF27775">
    <property type="protein sequence ID" value="CAF27775"/>
    <property type="gene ID" value="BH09820"/>
</dbReference>
<dbReference type="KEGG" id="bhe:BH09820"/>
<dbReference type="eggNOG" id="COG0855">
    <property type="taxonomic scope" value="Bacteria"/>
</dbReference>
<dbReference type="OrthoDB" id="9761456at2"/>
<dbReference type="Proteomes" id="UP000000421">
    <property type="component" value="Chromosome"/>
</dbReference>
<dbReference type="GO" id="GO:0009358">
    <property type="term" value="C:polyphosphate kinase complex"/>
    <property type="evidence" value="ECO:0007669"/>
    <property type="project" value="InterPro"/>
</dbReference>
<dbReference type="GO" id="GO:0005524">
    <property type="term" value="F:ATP binding"/>
    <property type="evidence" value="ECO:0007669"/>
    <property type="project" value="UniProtKB-KW"/>
</dbReference>
<dbReference type="GO" id="GO:0046872">
    <property type="term" value="F:metal ion binding"/>
    <property type="evidence" value="ECO:0007669"/>
    <property type="project" value="UniProtKB-KW"/>
</dbReference>
<dbReference type="GO" id="GO:0008976">
    <property type="term" value="F:polyphosphate kinase activity"/>
    <property type="evidence" value="ECO:0007669"/>
    <property type="project" value="UniProtKB-UniRule"/>
</dbReference>
<dbReference type="GO" id="GO:0006799">
    <property type="term" value="P:polyphosphate biosynthetic process"/>
    <property type="evidence" value="ECO:0007669"/>
    <property type="project" value="UniProtKB-UniRule"/>
</dbReference>
<dbReference type="CDD" id="cd09165">
    <property type="entry name" value="PLDc_PaPPK1_C1_like"/>
    <property type="match status" value="1"/>
</dbReference>
<dbReference type="CDD" id="cd09168">
    <property type="entry name" value="PLDc_PaPPK1_C2_like"/>
    <property type="match status" value="1"/>
</dbReference>
<dbReference type="Gene3D" id="3.30.870.10">
    <property type="entry name" value="Endonuclease Chain A"/>
    <property type="match status" value="2"/>
</dbReference>
<dbReference type="Gene3D" id="3.30.1840.10">
    <property type="entry name" value="Polyphosphate kinase middle domain"/>
    <property type="match status" value="1"/>
</dbReference>
<dbReference type="Gene3D" id="1.20.58.310">
    <property type="entry name" value="Polyphosphate kinase N-terminal domain"/>
    <property type="match status" value="1"/>
</dbReference>
<dbReference type="HAMAP" id="MF_00347">
    <property type="entry name" value="Polyphosphate_kinase"/>
    <property type="match status" value="1"/>
</dbReference>
<dbReference type="InterPro" id="IPR003414">
    <property type="entry name" value="PP_kinase"/>
</dbReference>
<dbReference type="InterPro" id="IPR041108">
    <property type="entry name" value="PP_kinase_C_1"/>
</dbReference>
<dbReference type="InterPro" id="IPR024953">
    <property type="entry name" value="PP_kinase_middle"/>
</dbReference>
<dbReference type="InterPro" id="IPR036830">
    <property type="entry name" value="PP_kinase_middle_dom_sf"/>
</dbReference>
<dbReference type="InterPro" id="IPR025200">
    <property type="entry name" value="PPK_C_dom2"/>
</dbReference>
<dbReference type="InterPro" id="IPR025198">
    <property type="entry name" value="PPK_N_dom"/>
</dbReference>
<dbReference type="InterPro" id="IPR036832">
    <property type="entry name" value="PPK_N_dom_sf"/>
</dbReference>
<dbReference type="NCBIfam" id="TIGR03705">
    <property type="entry name" value="poly_P_kin"/>
    <property type="match status" value="1"/>
</dbReference>
<dbReference type="NCBIfam" id="NF003917">
    <property type="entry name" value="PRK05443.1-1"/>
    <property type="match status" value="1"/>
</dbReference>
<dbReference type="NCBIfam" id="NF003918">
    <property type="entry name" value="PRK05443.1-2"/>
    <property type="match status" value="1"/>
</dbReference>
<dbReference type="NCBIfam" id="NF003919">
    <property type="entry name" value="PRK05443.1-4"/>
    <property type="match status" value="1"/>
</dbReference>
<dbReference type="NCBIfam" id="NF003921">
    <property type="entry name" value="PRK05443.2-2"/>
    <property type="match status" value="1"/>
</dbReference>
<dbReference type="PANTHER" id="PTHR30218">
    <property type="entry name" value="POLYPHOSPHATE KINASE"/>
    <property type="match status" value="1"/>
</dbReference>
<dbReference type="PANTHER" id="PTHR30218:SF0">
    <property type="entry name" value="POLYPHOSPHATE KINASE"/>
    <property type="match status" value="1"/>
</dbReference>
<dbReference type="Pfam" id="PF02503">
    <property type="entry name" value="PP_kinase"/>
    <property type="match status" value="1"/>
</dbReference>
<dbReference type="Pfam" id="PF13090">
    <property type="entry name" value="PP_kinase_C"/>
    <property type="match status" value="1"/>
</dbReference>
<dbReference type="Pfam" id="PF17941">
    <property type="entry name" value="PP_kinase_C_1"/>
    <property type="match status" value="1"/>
</dbReference>
<dbReference type="Pfam" id="PF13089">
    <property type="entry name" value="PP_kinase_N"/>
    <property type="match status" value="1"/>
</dbReference>
<dbReference type="PIRSF" id="PIRSF015589">
    <property type="entry name" value="PP_kinase"/>
    <property type="match status" value="1"/>
</dbReference>
<dbReference type="SUPFAM" id="SSF56024">
    <property type="entry name" value="Phospholipase D/nuclease"/>
    <property type="match status" value="2"/>
</dbReference>
<dbReference type="SUPFAM" id="SSF143724">
    <property type="entry name" value="PHP14-like"/>
    <property type="match status" value="1"/>
</dbReference>
<dbReference type="SUPFAM" id="SSF140356">
    <property type="entry name" value="PPK N-terminal domain-like"/>
    <property type="match status" value="1"/>
</dbReference>
<name>PPK1_BARHE</name>
<evidence type="ECO:0000255" key="1">
    <source>
        <dbReference type="HAMAP-Rule" id="MF_00347"/>
    </source>
</evidence>
<accession>Q6G327</accession>
<reference key="1">
    <citation type="journal article" date="2004" name="Proc. Natl. Acad. Sci. U.S.A.">
        <title>The louse-borne human pathogen Bartonella quintana is a genomic derivative of the zoonotic agent Bartonella henselae.</title>
        <authorList>
            <person name="Alsmark U.C.M."/>
            <person name="Frank A.C."/>
            <person name="Karlberg E.O."/>
            <person name="Legault B.-A."/>
            <person name="Ardell D.H."/>
            <person name="Canbaeck B."/>
            <person name="Eriksson A.-S."/>
            <person name="Naeslund A.K."/>
            <person name="Handley S.A."/>
            <person name="Huvet M."/>
            <person name="La Scola B."/>
            <person name="Holmberg M."/>
            <person name="Andersson S.G.E."/>
        </authorList>
    </citation>
    <scope>NUCLEOTIDE SEQUENCE [LARGE SCALE GENOMIC DNA]</scope>
    <source>
        <strain>ATCC 49882 / DSM 28221 / CCUG 30454 / Houston 1</strain>
    </source>
</reference>
<comment type="function">
    <text evidence="1">Catalyzes the reversible transfer of the terminal phosphate of ATP to form a long-chain polyphosphate (polyP).</text>
</comment>
<comment type="catalytic activity">
    <reaction evidence="1">
        <text>[phosphate](n) + ATP = [phosphate](n+1) + ADP</text>
        <dbReference type="Rhea" id="RHEA:19573"/>
        <dbReference type="Rhea" id="RHEA-COMP:9859"/>
        <dbReference type="Rhea" id="RHEA-COMP:14280"/>
        <dbReference type="ChEBI" id="CHEBI:16838"/>
        <dbReference type="ChEBI" id="CHEBI:30616"/>
        <dbReference type="ChEBI" id="CHEBI:456216"/>
        <dbReference type="EC" id="2.7.4.1"/>
    </reaction>
</comment>
<comment type="cofactor">
    <cofactor evidence="1">
        <name>Mg(2+)</name>
        <dbReference type="ChEBI" id="CHEBI:18420"/>
    </cofactor>
</comment>
<comment type="PTM">
    <text evidence="1">An intermediate of this reaction is the autophosphorylated ppk in which a phosphate is covalently linked to a histidine residue through a N-P bond.</text>
</comment>
<comment type="similarity">
    <text evidence="1">Belongs to the polyphosphate kinase 1 (PPK1) family.</text>
</comment>
<feature type="chain" id="PRO_1000133402" description="Polyphosphate kinase">
    <location>
        <begin position="1"/>
        <end position="726"/>
    </location>
</feature>
<feature type="active site" description="Phosphohistidine intermediate" evidence="1">
    <location>
        <position position="444"/>
    </location>
</feature>
<feature type="binding site" evidence="1">
    <location>
        <position position="60"/>
    </location>
    <ligand>
        <name>ATP</name>
        <dbReference type="ChEBI" id="CHEBI:30616"/>
    </ligand>
</feature>
<feature type="binding site" evidence="1">
    <location>
        <position position="384"/>
    </location>
    <ligand>
        <name>Mg(2+)</name>
        <dbReference type="ChEBI" id="CHEBI:18420"/>
    </ligand>
</feature>
<feature type="binding site" evidence="1">
    <location>
        <position position="414"/>
    </location>
    <ligand>
        <name>Mg(2+)</name>
        <dbReference type="ChEBI" id="CHEBI:18420"/>
    </ligand>
</feature>
<feature type="binding site" evidence="1">
    <location>
        <position position="477"/>
    </location>
    <ligand>
        <name>ATP</name>
        <dbReference type="ChEBI" id="CHEBI:30616"/>
    </ligand>
</feature>
<feature type="binding site" evidence="1">
    <location>
        <position position="573"/>
    </location>
    <ligand>
        <name>ATP</name>
        <dbReference type="ChEBI" id="CHEBI:30616"/>
    </ligand>
</feature>
<feature type="binding site" evidence="1">
    <location>
        <position position="601"/>
    </location>
    <ligand>
        <name>ATP</name>
        <dbReference type="ChEBI" id="CHEBI:30616"/>
    </ligand>
</feature>
<organism>
    <name type="scientific">Bartonella henselae (strain ATCC 49882 / DSM 28221 / CCUG 30454 / Houston 1)</name>
    <name type="common">Rochalimaea henselae</name>
    <dbReference type="NCBI Taxonomy" id="283166"/>
    <lineage>
        <taxon>Bacteria</taxon>
        <taxon>Pseudomonadati</taxon>
        <taxon>Pseudomonadota</taxon>
        <taxon>Alphaproteobacteria</taxon>
        <taxon>Hyphomicrobiales</taxon>
        <taxon>Bartonellaceae</taxon>
        <taxon>Bartonella</taxon>
    </lineage>
</organism>
<sequence length="726" mass="82647">MEKTVADQISLSDITMKNPARFINREFSWLQFNNRVLMEAANSKNPLLERLQFLSISATNLDEFFMVRVAGLAAQIRAGVTACSADGRTPQEQLDFVLAEISCLQDNQLRELSILRHELKQNNIEIICSAGLSETEKSWIEKYFLDTIFPVLTPLSVDPVRPFPFIPNLGFSIALQLSRCADQHSFIALLPLPTTLRRFIPLPQKDNRFRFIACEDVINLFMRHVFPDYEVEGIGTFRVIRDSDIEVEEEAEDLVHFFETALKRRRRGQVIRIEFEAKMPDHLRQFITNGLAVPEYCINVLDGFLALNTVSEIVSIPRNDLKFAPYDPRVPECICQHKGDCFAAIRQNDIVIHHPYESFDVVVEFLRQAARDPDVIEIKQTLYRTSNDSPIVSALIEAAEQGKSVTALVELKARFDEEANIRWARDLERAGVQVFFGFIALKTHAKMSLVVRREGKRRCSYVHLGTGNYHPINAKVYTDLSFFTTDDDIAHDVALLFNYIAEYVRPNEAMKIAFSPLTLRSRILEHIEGEITNARQGQLAAIWMKVNALVDPEIIDALYRASQAGVQIDLVVRGICCLRPGIPGISDNIRVKSIVGRFLEHSRIFCFGNGVNLPSENALVYFGSADMMPRNLDYRIEILVPVFNKMVRQQILLQVMLANIIDNQQSFDILNDGTSQLITPQRGESPFNAQEYFMANAGLSRMERSFDSSVSHLVALYQQKVKLYKD</sequence>
<gene>
    <name evidence="1" type="primary">ppk</name>
    <name type="ordered locus">BH09820</name>
</gene>
<keyword id="KW-0067">ATP-binding</keyword>
<keyword id="KW-0418">Kinase</keyword>
<keyword id="KW-0460">Magnesium</keyword>
<keyword id="KW-0479">Metal-binding</keyword>
<keyword id="KW-0547">Nucleotide-binding</keyword>
<keyword id="KW-0597">Phosphoprotein</keyword>
<keyword id="KW-0808">Transferase</keyword>